<gene>
    <name evidence="1" type="primary">cpfC</name>
    <name type="ordered locus">MW1773</name>
</gene>
<accession>P64126</accession>
<accession>Q99T43</accession>
<keyword id="KW-0963">Cytoplasm</keyword>
<keyword id="KW-0350">Heme biosynthesis</keyword>
<keyword id="KW-0408">Iron</keyword>
<keyword id="KW-0456">Lyase</keyword>
<keyword id="KW-0479">Metal-binding</keyword>
<keyword id="KW-0627">Porphyrin biosynthesis</keyword>
<feature type="chain" id="PRO_0000175206" description="Coproporphyrin III ferrochelatase">
    <location>
        <begin position="1"/>
        <end position="307"/>
    </location>
</feature>
<feature type="binding site" description="axial binding residue" evidence="1">
    <location>
        <position position="12"/>
    </location>
    <ligand>
        <name>Fe-coproporphyrin III</name>
        <dbReference type="ChEBI" id="CHEBI:68438"/>
    </ligand>
    <ligandPart>
        <name>Fe</name>
        <dbReference type="ChEBI" id="CHEBI:18248"/>
    </ligandPart>
</feature>
<feature type="binding site" evidence="1">
    <location>
        <position position="29"/>
    </location>
    <ligand>
        <name>Fe-coproporphyrin III</name>
        <dbReference type="ChEBI" id="CHEBI:68438"/>
    </ligand>
</feature>
<feature type="binding site" evidence="1">
    <location>
        <begin position="45"/>
        <end position="46"/>
    </location>
    <ligand>
        <name>Fe-coproporphyrin III</name>
        <dbReference type="ChEBI" id="CHEBI:68438"/>
    </ligand>
</feature>
<feature type="binding site" evidence="1">
    <location>
        <position position="53"/>
    </location>
    <ligand>
        <name>Fe-coproporphyrin III</name>
        <dbReference type="ChEBI" id="CHEBI:68438"/>
    </ligand>
</feature>
<feature type="binding site" evidence="1">
    <location>
        <position position="124"/>
    </location>
    <ligand>
        <name>Fe-coproporphyrin III</name>
        <dbReference type="ChEBI" id="CHEBI:68438"/>
    </ligand>
</feature>
<feature type="binding site" evidence="1">
    <location>
        <position position="181"/>
    </location>
    <ligand>
        <name>Fe(2+)</name>
        <dbReference type="ChEBI" id="CHEBI:29033"/>
    </ligand>
</feature>
<feature type="binding site" evidence="1">
    <location>
        <position position="263"/>
    </location>
    <ligand>
        <name>Fe(2+)</name>
        <dbReference type="ChEBI" id="CHEBI:29033"/>
    </ligand>
</feature>
<sequence>MTKKMGLLVMAYGTPYKESDIEPYYTDIRHGKRPSEEELQDLKDRYEFIGGLSPLAGTTDDQADALVSALNKAYADVEFKLYLGLKHISPFIEDAVEQMHNDGITEAITVVLAPHYSSFSVGSYDKRADEEAAKYGIQLTHVKHYYEQPKFIEYWTNKVNETLAQIPEEEHKDTVLVVSAHSLPKGLIEKNNDPYPQELEHTALLIKEQSNIEHIAIGWQSEGNTGTPWLGPDVQDLTRDLYEKHQYKNFIYTPVGFVCEHLEVLYDNDYECKVVCDDIGANYYRPKMPNTHPLFIGAIVDEIKSIF</sequence>
<organism>
    <name type="scientific">Staphylococcus aureus (strain MW2)</name>
    <dbReference type="NCBI Taxonomy" id="196620"/>
    <lineage>
        <taxon>Bacteria</taxon>
        <taxon>Bacillati</taxon>
        <taxon>Bacillota</taxon>
        <taxon>Bacilli</taxon>
        <taxon>Bacillales</taxon>
        <taxon>Staphylococcaceae</taxon>
        <taxon>Staphylococcus</taxon>
    </lineage>
</organism>
<dbReference type="EC" id="4.99.1.9" evidence="1"/>
<dbReference type="EMBL" id="BA000033">
    <property type="protein sequence ID" value="BAB95638.1"/>
    <property type="molecule type" value="Genomic_DNA"/>
</dbReference>
<dbReference type="SMR" id="P64126"/>
<dbReference type="KEGG" id="sam:MW1773"/>
<dbReference type="HOGENOM" id="CLU_018884_2_1_9"/>
<dbReference type="UniPathway" id="UPA00252"/>
<dbReference type="GO" id="GO:0005737">
    <property type="term" value="C:cytoplasm"/>
    <property type="evidence" value="ECO:0007669"/>
    <property type="project" value="UniProtKB-SubCell"/>
</dbReference>
<dbReference type="GO" id="GO:0004325">
    <property type="term" value="F:ferrochelatase activity"/>
    <property type="evidence" value="ECO:0007669"/>
    <property type="project" value="UniProtKB-UniRule"/>
</dbReference>
<dbReference type="GO" id="GO:0046872">
    <property type="term" value="F:metal ion binding"/>
    <property type="evidence" value="ECO:0007669"/>
    <property type="project" value="UniProtKB-KW"/>
</dbReference>
<dbReference type="GO" id="GO:0006783">
    <property type="term" value="P:heme biosynthetic process"/>
    <property type="evidence" value="ECO:0007669"/>
    <property type="project" value="UniProtKB-UniRule"/>
</dbReference>
<dbReference type="CDD" id="cd00419">
    <property type="entry name" value="Ferrochelatase_C"/>
    <property type="match status" value="1"/>
</dbReference>
<dbReference type="CDD" id="cd03411">
    <property type="entry name" value="Ferrochelatase_N"/>
    <property type="match status" value="1"/>
</dbReference>
<dbReference type="FunFam" id="3.40.50.1400:FF:000009">
    <property type="entry name" value="Ferrochelatase"/>
    <property type="match status" value="1"/>
</dbReference>
<dbReference type="Gene3D" id="3.40.50.1400">
    <property type="match status" value="2"/>
</dbReference>
<dbReference type="HAMAP" id="MF_00323">
    <property type="entry name" value="Ferrochelatase"/>
    <property type="match status" value="1"/>
</dbReference>
<dbReference type="InterPro" id="IPR001015">
    <property type="entry name" value="Ferrochelatase"/>
</dbReference>
<dbReference type="InterPro" id="IPR019772">
    <property type="entry name" value="Ferrochelatase_AS"/>
</dbReference>
<dbReference type="InterPro" id="IPR033644">
    <property type="entry name" value="Ferrochelatase_C"/>
</dbReference>
<dbReference type="InterPro" id="IPR033659">
    <property type="entry name" value="Ferrochelatase_N"/>
</dbReference>
<dbReference type="NCBIfam" id="TIGR00109">
    <property type="entry name" value="hemH"/>
    <property type="match status" value="1"/>
</dbReference>
<dbReference type="NCBIfam" id="NF009095">
    <property type="entry name" value="PRK12435.1"/>
    <property type="match status" value="1"/>
</dbReference>
<dbReference type="PANTHER" id="PTHR11108">
    <property type="entry name" value="FERROCHELATASE"/>
    <property type="match status" value="1"/>
</dbReference>
<dbReference type="PANTHER" id="PTHR11108:SF1">
    <property type="entry name" value="FERROCHELATASE, MITOCHONDRIAL"/>
    <property type="match status" value="1"/>
</dbReference>
<dbReference type="Pfam" id="PF00762">
    <property type="entry name" value="Ferrochelatase"/>
    <property type="match status" value="1"/>
</dbReference>
<dbReference type="SUPFAM" id="SSF53800">
    <property type="entry name" value="Chelatase"/>
    <property type="match status" value="1"/>
</dbReference>
<dbReference type="PROSITE" id="PS00534">
    <property type="entry name" value="FERROCHELATASE"/>
    <property type="match status" value="1"/>
</dbReference>
<name>CPFC_STAAW</name>
<evidence type="ECO:0000255" key="1">
    <source>
        <dbReference type="HAMAP-Rule" id="MF_00323"/>
    </source>
</evidence>
<comment type="function">
    <text evidence="1">Involved in coproporphyrin-dependent heme b biosynthesis. Catalyzes the insertion of ferrous iron into coproporphyrin III to form Fe-coproporphyrin III.</text>
</comment>
<comment type="catalytic activity">
    <reaction evidence="1">
        <text>Fe-coproporphyrin III + 2 H(+) = coproporphyrin III + Fe(2+)</text>
        <dbReference type="Rhea" id="RHEA:49572"/>
        <dbReference type="ChEBI" id="CHEBI:15378"/>
        <dbReference type="ChEBI" id="CHEBI:29033"/>
        <dbReference type="ChEBI" id="CHEBI:68438"/>
        <dbReference type="ChEBI" id="CHEBI:131725"/>
        <dbReference type="EC" id="4.99.1.9"/>
    </reaction>
    <physiologicalReaction direction="right-to-left" evidence="1">
        <dbReference type="Rhea" id="RHEA:49574"/>
    </physiologicalReaction>
</comment>
<comment type="pathway">
    <text evidence="1">Porphyrin-containing compound metabolism; protoheme biosynthesis.</text>
</comment>
<comment type="subcellular location">
    <subcellularLocation>
        <location evidence="1">Cytoplasm</location>
    </subcellularLocation>
</comment>
<comment type="similarity">
    <text evidence="1">Belongs to the ferrochelatase family.</text>
</comment>
<proteinExistence type="inferred from homology"/>
<reference key="1">
    <citation type="journal article" date="2002" name="Lancet">
        <title>Genome and virulence determinants of high virulence community-acquired MRSA.</title>
        <authorList>
            <person name="Baba T."/>
            <person name="Takeuchi F."/>
            <person name="Kuroda M."/>
            <person name="Yuzawa H."/>
            <person name="Aoki K."/>
            <person name="Oguchi A."/>
            <person name="Nagai Y."/>
            <person name="Iwama N."/>
            <person name="Asano K."/>
            <person name="Naimi T."/>
            <person name="Kuroda H."/>
            <person name="Cui L."/>
            <person name="Yamamoto K."/>
            <person name="Hiramatsu K."/>
        </authorList>
    </citation>
    <scope>NUCLEOTIDE SEQUENCE [LARGE SCALE GENOMIC DNA]</scope>
    <source>
        <strain>MW2</strain>
    </source>
</reference>
<protein>
    <recommendedName>
        <fullName evidence="1">Coproporphyrin III ferrochelatase</fullName>
        <ecNumber evidence="1">4.99.1.9</ecNumber>
    </recommendedName>
</protein>